<name>GCSPA_KORVE</name>
<accession>Q1INU0</accession>
<sequence length="443" mass="48428">MRYLPKSQSDRDQMLRELGCATIDDLFAPIPAEYRLTRDLAIPRQYGESEILDFFKQRASENANGYSIFIGAGAYNHYRPVVIDSLISRGEWFTAYTPYQPEISQGTLQAIFEFQSMICELTGMEVANASMYDGSTGAAEAIMMAVRLTGRHSAIIANTVHPEYREVIATYAQHQGLPISHVGYNAETGRVDIKALEAAITDQTAAVLIQSPNFFGTIEDVAAIADLVHKKGALLVVSISEALSLGLIKPPSEADIISMESQSFGVPLGYGGPYVGVIATKEKFVRQIPGRLCGQTVDRNGKRGFVLTLSTREQHIRREKATSNICTNQALIALIASIFMTVYGKQGLRELAKQNLAKTAYAVSAFEKAGAKVLFKNSPFFNEFVVQTKSDSRELNDKLISDKIIGGFPLKKFYPELGNSAVWCVTELNAKAAIDAAAKGVAQ</sequence>
<comment type="function">
    <text evidence="1">The glycine cleavage system catalyzes the degradation of glycine. The P protein binds the alpha-amino group of glycine through its pyridoxal phosphate cofactor; CO(2) is released and the remaining methylamine moiety is then transferred to the lipoamide cofactor of the H protein.</text>
</comment>
<comment type="catalytic activity">
    <reaction evidence="1">
        <text>N(6)-[(R)-lipoyl]-L-lysyl-[glycine-cleavage complex H protein] + glycine + H(+) = N(6)-[(R)-S(8)-aminomethyldihydrolipoyl]-L-lysyl-[glycine-cleavage complex H protein] + CO2</text>
        <dbReference type="Rhea" id="RHEA:24304"/>
        <dbReference type="Rhea" id="RHEA-COMP:10494"/>
        <dbReference type="Rhea" id="RHEA-COMP:10495"/>
        <dbReference type="ChEBI" id="CHEBI:15378"/>
        <dbReference type="ChEBI" id="CHEBI:16526"/>
        <dbReference type="ChEBI" id="CHEBI:57305"/>
        <dbReference type="ChEBI" id="CHEBI:83099"/>
        <dbReference type="ChEBI" id="CHEBI:83143"/>
        <dbReference type="EC" id="1.4.4.2"/>
    </reaction>
</comment>
<comment type="subunit">
    <text evidence="1">The glycine cleavage system is composed of four proteins: P, T, L and H. In this organism, the P 'protein' is a heterodimer of two subunits.</text>
</comment>
<comment type="similarity">
    <text evidence="1">Belongs to the GcvP family. N-terminal subunit subfamily.</text>
</comment>
<dbReference type="EC" id="1.4.4.2" evidence="1"/>
<dbReference type="EMBL" id="CP000360">
    <property type="protein sequence ID" value="ABF41460.1"/>
    <property type="molecule type" value="Genomic_DNA"/>
</dbReference>
<dbReference type="RefSeq" id="WP_011523261.1">
    <property type="nucleotide sequence ID" value="NC_008009.1"/>
</dbReference>
<dbReference type="SMR" id="Q1INU0"/>
<dbReference type="STRING" id="204669.Acid345_2459"/>
<dbReference type="EnsemblBacteria" id="ABF41460">
    <property type="protein sequence ID" value="ABF41460"/>
    <property type="gene ID" value="Acid345_2459"/>
</dbReference>
<dbReference type="KEGG" id="aba:Acid345_2459"/>
<dbReference type="eggNOG" id="COG0403">
    <property type="taxonomic scope" value="Bacteria"/>
</dbReference>
<dbReference type="HOGENOM" id="CLU_004620_0_2_0"/>
<dbReference type="OrthoDB" id="9771867at2"/>
<dbReference type="Proteomes" id="UP000002432">
    <property type="component" value="Chromosome"/>
</dbReference>
<dbReference type="GO" id="GO:0004375">
    <property type="term" value="F:glycine dehydrogenase (decarboxylating) activity"/>
    <property type="evidence" value="ECO:0007669"/>
    <property type="project" value="UniProtKB-EC"/>
</dbReference>
<dbReference type="GO" id="GO:0019464">
    <property type="term" value="P:glycine decarboxylation via glycine cleavage system"/>
    <property type="evidence" value="ECO:0007669"/>
    <property type="project" value="UniProtKB-UniRule"/>
</dbReference>
<dbReference type="GO" id="GO:0009116">
    <property type="term" value="P:nucleoside metabolic process"/>
    <property type="evidence" value="ECO:0007669"/>
    <property type="project" value="InterPro"/>
</dbReference>
<dbReference type="CDD" id="cd00613">
    <property type="entry name" value="GDC-P"/>
    <property type="match status" value="1"/>
</dbReference>
<dbReference type="Gene3D" id="3.90.1150.10">
    <property type="entry name" value="Aspartate Aminotransferase, domain 1"/>
    <property type="match status" value="1"/>
</dbReference>
<dbReference type="Gene3D" id="3.40.640.10">
    <property type="entry name" value="Type I PLP-dependent aspartate aminotransferase-like (Major domain)"/>
    <property type="match status" value="1"/>
</dbReference>
<dbReference type="HAMAP" id="MF_00712">
    <property type="entry name" value="GcvPA"/>
    <property type="match status" value="1"/>
</dbReference>
<dbReference type="InterPro" id="IPR023010">
    <property type="entry name" value="GcvPA"/>
</dbReference>
<dbReference type="InterPro" id="IPR049315">
    <property type="entry name" value="GDC-P_N"/>
</dbReference>
<dbReference type="InterPro" id="IPR020581">
    <property type="entry name" value="GDC_P"/>
</dbReference>
<dbReference type="InterPro" id="IPR015424">
    <property type="entry name" value="PyrdxlP-dep_Trfase"/>
</dbReference>
<dbReference type="InterPro" id="IPR015421">
    <property type="entry name" value="PyrdxlP-dep_Trfase_major"/>
</dbReference>
<dbReference type="InterPro" id="IPR015422">
    <property type="entry name" value="PyrdxlP-dep_Trfase_small"/>
</dbReference>
<dbReference type="NCBIfam" id="NF001696">
    <property type="entry name" value="PRK00451.1"/>
    <property type="match status" value="1"/>
</dbReference>
<dbReference type="PANTHER" id="PTHR42806">
    <property type="entry name" value="GLYCINE CLEAVAGE SYSTEM P-PROTEIN"/>
    <property type="match status" value="1"/>
</dbReference>
<dbReference type="PANTHER" id="PTHR42806:SF1">
    <property type="entry name" value="GLYCINE DEHYDROGENASE (DECARBOXYLATING)"/>
    <property type="match status" value="1"/>
</dbReference>
<dbReference type="Pfam" id="PF02347">
    <property type="entry name" value="GDC-P"/>
    <property type="match status" value="1"/>
</dbReference>
<dbReference type="PIRSF" id="PIRSF006815">
    <property type="entry name" value="GcvPA"/>
    <property type="match status" value="1"/>
</dbReference>
<dbReference type="SUPFAM" id="SSF53383">
    <property type="entry name" value="PLP-dependent transferases"/>
    <property type="match status" value="1"/>
</dbReference>
<reference key="1">
    <citation type="journal article" date="2009" name="Appl. Environ. Microbiol.">
        <title>Three genomes from the phylum Acidobacteria provide insight into the lifestyles of these microorganisms in soils.</title>
        <authorList>
            <person name="Ward N.L."/>
            <person name="Challacombe J.F."/>
            <person name="Janssen P.H."/>
            <person name="Henrissat B."/>
            <person name="Coutinho P.M."/>
            <person name="Wu M."/>
            <person name="Xie G."/>
            <person name="Haft D.H."/>
            <person name="Sait M."/>
            <person name="Badger J."/>
            <person name="Barabote R.D."/>
            <person name="Bradley B."/>
            <person name="Brettin T.S."/>
            <person name="Brinkac L.M."/>
            <person name="Bruce D."/>
            <person name="Creasy T."/>
            <person name="Daugherty S.C."/>
            <person name="Davidsen T.M."/>
            <person name="DeBoy R.T."/>
            <person name="Detter J.C."/>
            <person name="Dodson R.J."/>
            <person name="Durkin A.S."/>
            <person name="Ganapathy A."/>
            <person name="Gwinn-Giglio M."/>
            <person name="Han C.S."/>
            <person name="Khouri H."/>
            <person name="Kiss H."/>
            <person name="Kothari S.P."/>
            <person name="Madupu R."/>
            <person name="Nelson K.E."/>
            <person name="Nelson W.C."/>
            <person name="Paulsen I."/>
            <person name="Penn K."/>
            <person name="Ren Q."/>
            <person name="Rosovitz M.J."/>
            <person name="Selengut J.D."/>
            <person name="Shrivastava S."/>
            <person name="Sullivan S.A."/>
            <person name="Tapia R."/>
            <person name="Thompson L.S."/>
            <person name="Watkins K.L."/>
            <person name="Yang Q."/>
            <person name="Yu C."/>
            <person name="Zafar N."/>
            <person name="Zhou L."/>
            <person name="Kuske C.R."/>
        </authorList>
    </citation>
    <scope>NUCLEOTIDE SEQUENCE [LARGE SCALE GENOMIC DNA]</scope>
    <source>
        <strain>Ellin345</strain>
    </source>
</reference>
<protein>
    <recommendedName>
        <fullName evidence="1">Probable glycine dehydrogenase (decarboxylating) subunit 1</fullName>
        <ecNumber evidence="1">1.4.4.2</ecNumber>
    </recommendedName>
    <alternativeName>
        <fullName evidence="1">Glycine cleavage system P-protein subunit 1</fullName>
    </alternativeName>
    <alternativeName>
        <fullName evidence="1">Glycine decarboxylase subunit 1</fullName>
    </alternativeName>
    <alternativeName>
        <fullName evidence="1">Glycine dehydrogenase (aminomethyl-transferring) subunit 1</fullName>
    </alternativeName>
</protein>
<organism>
    <name type="scientific">Koribacter versatilis (strain Ellin345)</name>
    <dbReference type="NCBI Taxonomy" id="204669"/>
    <lineage>
        <taxon>Bacteria</taxon>
        <taxon>Pseudomonadati</taxon>
        <taxon>Acidobacteriota</taxon>
        <taxon>Terriglobia</taxon>
        <taxon>Terriglobales</taxon>
        <taxon>Candidatus Korobacteraceae</taxon>
        <taxon>Candidatus Korobacter</taxon>
    </lineage>
</organism>
<proteinExistence type="inferred from homology"/>
<feature type="chain" id="PRO_1000045633" description="Probable glycine dehydrogenase (decarboxylating) subunit 1">
    <location>
        <begin position="1"/>
        <end position="443"/>
    </location>
</feature>
<keyword id="KW-0560">Oxidoreductase</keyword>
<keyword id="KW-1185">Reference proteome</keyword>
<gene>
    <name evidence="1" type="primary">gcvPA</name>
    <name type="ordered locus">Acid345_2459</name>
</gene>
<evidence type="ECO:0000255" key="1">
    <source>
        <dbReference type="HAMAP-Rule" id="MF_00712"/>
    </source>
</evidence>